<proteinExistence type="inferred from homology"/>
<organism>
    <name type="scientific">Hyphomicrobium methylovorum</name>
    <dbReference type="NCBI Taxonomy" id="84"/>
    <lineage>
        <taxon>Bacteria</taxon>
        <taxon>Pseudomonadati</taxon>
        <taxon>Pseudomonadota</taxon>
        <taxon>Alphaproteobacteria</taxon>
        <taxon>Hyphomicrobiales</taxon>
        <taxon>Hyphomicrobiaceae</taxon>
        <taxon>Hyphomicrobium</taxon>
    </lineage>
</organism>
<evidence type="ECO:0000255" key="1">
    <source>
        <dbReference type="HAMAP-Rule" id="MF_00051"/>
    </source>
</evidence>
<accession>P34895</accession>
<feature type="chain" id="PRO_0000113588" description="Serine hydroxymethyltransferase">
    <location>
        <begin position="1"/>
        <end position="434"/>
    </location>
</feature>
<feature type="binding site" evidence="1">
    <location>
        <position position="133"/>
    </location>
    <ligand>
        <name>(6S)-5,6,7,8-tetrahydrofolate</name>
        <dbReference type="ChEBI" id="CHEBI:57453"/>
    </ligand>
</feature>
<feature type="binding site" evidence="1">
    <location>
        <begin position="137"/>
        <end position="139"/>
    </location>
    <ligand>
        <name>(6S)-5,6,7,8-tetrahydrofolate</name>
        <dbReference type="ChEBI" id="CHEBI:57453"/>
    </ligand>
</feature>
<feature type="site" description="Plays an important role in substrate specificity" evidence="1">
    <location>
        <position position="241"/>
    </location>
</feature>
<feature type="modified residue" description="N6-(pyridoxal phosphate)lysine" evidence="1">
    <location>
        <position position="242"/>
    </location>
</feature>
<sequence>MSSAPAAGTASTSRFFKSHVSETDPDIFSAIQKEFGRQQHEIELIASENIVSQAVLDAAGSVLTNKYAEGYPGKRYYGGCQYVDIVEDIAIDRAKKLFNCEFANVQPNSGSQANQGVFNALAQPGDTILGLSLAAGGHLTHGAPVNQSGKWFKAVHYMVKPDSHLIDMDEVRKLAQEHKPRIIIAGGSAYPRKIDFAAFRAIADEVGAIFLVDMAHFAGLVAAGLIPSPFPHAHVVTTTTHKTLRGPRGGMILTNDADIAKKINSAIFPGIQGGPLMHVIAGKAVAFGEALRPDFKVYIKQVMDNARALGEVLVQNGFALVSGGTDTHLVLVDLRPKKLTGTKAEKALGRANITCNKNGIPFDPEKPMVTSGIRLGSPAGTTRGFGVAEFQEIGRLISEVLDGVAKNGEDGNGAVEAAVKAKAIALCDRFPIYA</sequence>
<keyword id="KW-0028">Amino-acid biosynthesis</keyword>
<keyword id="KW-0963">Cytoplasm</keyword>
<keyword id="KW-0554">One-carbon metabolism</keyword>
<keyword id="KW-0663">Pyridoxal phosphate</keyword>
<keyword id="KW-0808">Transferase</keyword>
<dbReference type="EC" id="2.1.2.1" evidence="1"/>
<dbReference type="EMBL" id="D13739">
    <property type="protein sequence ID" value="BAA02884.1"/>
    <property type="molecule type" value="Genomic_DNA"/>
</dbReference>
<dbReference type="PIR" id="S30334">
    <property type="entry name" value="S30334"/>
</dbReference>
<dbReference type="SMR" id="P34895"/>
<dbReference type="BioCyc" id="MetaCyc:MONOMER-4244"/>
<dbReference type="UniPathway" id="UPA00193"/>
<dbReference type="UniPathway" id="UPA00288">
    <property type="reaction ID" value="UER01023"/>
</dbReference>
<dbReference type="GO" id="GO:0005829">
    <property type="term" value="C:cytosol"/>
    <property type="evidence" value="ECO:0007669"/>
    <property type="project" value="TreeGrafter"/>
</dbReference>
<dbReference type="GO" id="GO:0004372">
    <property type="term" value="F:glycine hydroxymethyltransferase activity"/>
    <property type="evidence" value="ECO:0007669"/>
    <property type="project" value="UniProtKB-UniRule"/>
</dbReference>
<dbReference type="GO" id="GO:0030170">
    <property type="term" value="F:pyridoxal phosphate binding"/>
    <property type="evidence" value="ECO:0007669"/>
    <property type="project" value="UniProtKB-UniRule"/>
</dbReference>
<dbReference type="GO" id="GO:0019264">
    <property type="term" value="P:glycine biosynthetic process from serine"/>
    <property type="evidence" value="ECO:0007669"/>
    <property type="project" value="UniProtKB-UniRule"/>
</dbReference>
<dbReference type="GO" id="GO:0035999">
    <property type="term" value="P:tetrahydrofolate interconversion"/>
    <property type="evidence" value="ECO:0007669"/>
    <property type="project" value="UniProtKB-UniRule"/>
</dbReference>
<dbReference type="CDD" id="cd00378">
    <property type="entry name" value="SHMT"/>
    <property type="match status" value="1"/>
</dbReference>
<dbReference type="FunFam" id="3.40.640.10:FF:000001">
    <property type="entry name" value="Serine hydroxymethyltransferase"/>
    <property type="match status" value="1"/>
</dbReference>
<dbReference type="Gene3D" id="3.90.1150.10">
    <property type="entry name" value="Aspartate Aminotransferase, domain 1"/>
    <property type="match status" value="1"/>
</dbReference>
<dbReference type="Gene3D" id="3.40.640.10">
    <property type="entry name" value="Type I PLP-dependent aspartate aminotransferase-like (Major domain)"/>
    <property type="match status" value="1"/>
</dbReference>
<dbReference type="HAMAP" id="MF_00051">
    <property type="entry name" value="SHMT"/>
    <property type="match status" value="1"/>
</dbReference>
<dbReference type="InterPro" id="IPR015424">
    <property type="entry name" value="PyrdxlP-dep_Trfase"/>
</dbReference>
<dbReference type="InterPro" id="IPR015421">
    <property type="entry name" value="PyrdxlP-dep_Trfase_major"/>
</dbReference>
<dbReference type="InterPro" id="IPR015422">
    <property type="entry name" value="PyrdxlP-dep_Trfase_small"/>
</dbReference>
<dbReference type="InterPro" id="IPR001085">
    <property type="entry name" value="Ser_HO-MeTrfase"/>
</dbReference>
<dbReference type="InterPro" id="IPR049943">
    <property type="entry name" value="Ser_HO-MeTrfase-like"/>
</dbReference>
<dbReference type="InterPro" id="IPR019798">
    <property type="entry name" value="Ser_HO-MeTrfase_PLP_BS"/>
</dbReference>
<dbReference type="InterPro" id="IPR039429">
    <property type="entry name" value="SHMT-like_dom"/>
</dbReference>
<dbReference type="NCBIfam" id="NF000586">
    <property type="entry name" value="PRK00011.1"/>
    <property type="match status" value="1"/>
</dbReference>
<dbReference type="PANTHER" id="PTHR11680">
    <property type="entry name" value="SERINE HYDROXYMETHYLTRANSFERASE"/>
    <property type="match status" value="1"/>
</dbReference>
<dbReference type="PANTHER" id="PTHR11680:SF35">
    <property type="entry name" value="SERINE HYDROXYMETHYLTRANSFERASE 1"/>
    <property type="match status" value="1"/>
</dbReference>
<dbReference type="Pfam" id="PF00464">
    <property type="entry name" value="SHMT"/>
    <property type="match status" value="1"/>
</dbReference>
<dbReference type="PIRSF" id="PIRSF000412">
    <property type="entry name" value="SHMT"/>
    <property type="match status" value="1"/>
</dbReference>
<dbReference type="SUPFAM" id="SSF53383">
    <property type="entry name" value="PLP-dependent transferases"/>
    <property type="match status" value="1"/>
</dbReference>
<dbReference type="PROSITE" id="PS00096">
    <property type="entry name" value="SHMT"/>
    <property type="match status" value="1"/>
</dbReference>
<gene>
    <name evidence="1" type="primary">glyA</name>
</gene>
<comment type="function">
    <text evidence="1">Catalyzes the reversible interconversion of serine and glycine with tetrahydrofolate (THF) serving as the one-carbon carrier. This reaction serves as the major source of one-carbon groups required for the biosynthesis of purines, thymidylate, methionine, and other important biomolecules. Also exhibits THF-independent aldolase activity toward beta-hydroxyamino acids, producing glycine and aldehydes, via a retro-aldol mechanism.</text>
</comment>
<comment type="catalytic activity">
    <reaction evidence="1">
        <text>(6R)-5,10-methylene-5,6,7,8-tetrahydrofolate + glycine + H2O = (6S)-5,6,7,8-tetrahydrofolate + L-serine</text>
        <dbReference type="Rhea" id="RHEA:15481"/>
        <dbReference type="ChEBI" id="CHEBI:15377"/>
        <dbReference type="ChEBI" id="CHEBI:15636"/>
        <dbReference type="ChEBI" id="CHEBI:33384"/>
        <dbReference type="ChEBI" id="CHEBI:57305"/>
        <dbReference type="ChEBI" id="CHEBI:57453"/>
        <dbReference type="EC" id="2.1.2.1"/>
    </reaction>
</comment>
<comment type="cofactor">
    <cofactor evidence="1">
        <name>pyridoxal 5'-phosphate</name>
        <dbReference type="ChEBI" id="CHEBI:597326"/>
    </cofactor>
</comment>
<comment type="pathway">
    <text evidence="1">One-carbon metabolism; tetrahydrofolate interconversion.</text>
</comment>
<comment type="pathway">
    <text evidence="1">Amino-acid biosynthesis; glycine biosynthesis; glycine from L-serine: step 1/1.</text>
</comment>
<comment type="subunit">
    <text evidence="1">Homodimer.</text>
</comment>
<comment type="subcellular location">
    <subcellularLocation>
        <location evidence="1">Cytoplasm</location>
    </subcellularLocation>
</comment>
<comment type="similarity">
    <text evidence="1">Belongs to the SHMT family.</text>
</comment>
<protein>
    <recommendedName>
        <fullName evidence="1">Serine hydroxymethyltransferase</fullName>
        <shortName evidence="1">SHMT</shortName>
        <shortName evidence="1">Serine methylase</shortName>
        <ecNumber evidence="1">2.1.2.1</ecNumber>
    </recommendedName>
</protein>
<reference key="1">
    <citation type="journal article" date="1993" name="Eur. J. Biochem.">
        <title>Molecular cloning and expression of the gene for serine hydroxymethyltransferase from an obligate methylotroph Hyphomicrobium methylovorum GM2.</title>
        <authorList>
            <person name="Miyata A."/>
            <person name="Yoshida T."/>
            <person name="Yamaguchi K."/>
            <person name="Yokoyama C."/>
            <person name="Tanabe T."/>
            <person name="Toh H."/>
            <person name="Mitsunaga T."/>
            <person name="Izumi Y."/>
        </authorList>
    </citation>
    <scope>NUCLEOTIDE SEQUENCE [GENOMIC DNA]</scope>
    <source>
        <strain>KM146 / GM2</strain>
    </source>
</reference>
<name>GLYA_HYPME</name>